<keyword id="KW-0877">Alternative promoter usage</keyword>
<keyword id="KW-0050">Antiport</keyword>
<keyword id="KW-1003">Cell membrane</keyword>
<keyword id="KW-0325">Glycoprotein</keyword>
<keyword id="KW-0472">Membrane</keyword>
<keyword id="KW-0496">Mitochondrion</keyword>
<keyword id="KW-1000">Mitochondrion outer membrane</keyword>
<keyword id="KW-0597">Phosphoprotein</keyword>
<keyword id="KW-1185">Reference proteome</keyword>
<keyword id="KW-0812">Transmembrane</keyword>
<keyword id="KW-1133">Transmembrane helix</keyword>
<keyword id="KW-0813">Transport</keyword>
<gene>
    <name type="primary">Slc44a2</name>
    <name type="synonym">Ctl2</name>
</gene>
<sequence length="706" mass="80110">MGKDSQNYYGKHGTPQKYDPTFKGPIYNRGCTDVICCVLLFLAIVGYVAVGIIAWTHGDPRKVIYPTDSRGEFCGQKGTKNADKPFLFYFNIVKCANPLVLLEFHCPTPQICVKQCPDRYLTLLSARNTRDFDYYKQFCVPGFQNNKGVTEILRDGECPAVITPSKPLAQRCFPAIHASKGVLMVGNETTYEDGHGARKNITDLVEGAKKANKILEARQLAMQIFEDYTVSWYWIIIGLVIAMVLSLLFIVLLRFLAGIMVWVMIVMVILVLGYGIFHCYMEYSRLRGEAGSDVSLVDLGFQTDLRVYLHLRQTWMAFMIILSILEVVIILLLIFLRKRILIAIALIKEASRAVGHVMCSLLYPLVTFFLLCLCIAYWASTSVFLSTSNTAVYKVVDDTACPLLRKTCNPETFPLRNESLQCPTARCQFAFYGGESTYHRALLGLQIFNAFMFFWLANFVLALGQVTLAGAFASYYWAMRKPDDMPAFPLFSAFGRALRYHTGSLAFGSLILAIVQIIRVMLEYLDQRLKAAQNKFAKFLMVCLKCCFWCLEKFIKFLNRNAYIMIAIYGTNFCTSARNAFFLLMRNIIRVAVLDKVTDFLFLLGKLLIVGSVGILAFFFFTHRIRIVQDTAPPLNYYWVPILTVIIGSYLIAHGFFSVYGMCVDTLFLCFLEDLERNDGSAERPYFMSSTLKKLLNKTNKKVAES</sequence>
<evidence type="ECO:0000250" key="1">
    <source>
        <dbReference type="UniProtKB" id="B4F795"/>
    </source>
</evidence>
<evidence type="ECO:0000250" key="2">
    <source>
        <dbReference type="UniProtKB" id="Q8IWA5"/>
    </source>
</evidence>
<evidence type="ECO:0000255" key="3"/>
<evidence type="ECO:0000269" key="4">
    <source>
    </source>
</evidence>
<evidence type="ECO:0000269" key="5">
    <source>
    </source>
</evidence>
<evidence type="ECO:0000269" key="6">
    <source>
    </source>
</evidence>
<evidence type="ECO:0000303" key="7">
    <source>
    </source>
</evidence>
<evidence type="ECO:0000303" key="8">
    <source>
    </source>
</evidence>
<evidence type="ECO:0000305" key="9"/>
<organism>
    <name type="scientific">Mus musculus</name>
    <name type="common">Mouse</name>
    <dbReference type="NCBI Taxonomy" id="10090"/>
    <lineage>
        <taxon>Eukaryota</taxon>
        <taxon>Metazoa</taxon>
        <taxon>Chordata</taxon>
        <taxon>Craniata</taxon>
        <taxon>Vertebrata</taxon>
        <taxon>Euteleostomi</taxon>
        <taxon>Mammalia</taxon>
        <taxon>Eutheria</taxon>
        <taxon>Euarchontoglires</taxon>
        <taxon>Glires</taxon>
        <taxon>Rodentia</taxon>
        <taxon>Myomorpha</taxon>
        <taxon>Muroidea</taxon>
        <taxon>Muridae</taxon>
        <taxon>Murinae</taxon>
        <taxon>Mus</taxon>
        <taxon>Mus</taxon>
    </lineage>
</organism>
<reference key="1">
    <citation type="journal article" date="2005" name="Science">
        <title>The transcriptional landscape of the mammalian genome.</title>
        <authorList>
            <person name="Carninci P."/>
            <person name="Kasukawa T."/>
            <person name="Katayama S."/>
            <person name="Gough J."/>
            <person name="Frith M.C."/>
            <person name="Maeda N."/>
            <person name="Oyama R."/>
            <person name="Ravasi T."/>
            <person name="Lenhard B."/>
            <person name="Wells C."/>
            <person name="Kodzius R."/>
            <person name="Shimokawa K."/>
            <person name="Bajic V.B."/>
            <person name="Brenner S.E."/>
            <person name="Batalov S."/>
            <person name="Forrest A.R."/>
            <person name="Zavolan M."/>
            <person name="Davis M.J."/>
            <person name="Wilming L.G."/>
            <person name="Aidinis V."/>
            <person name="Allen J.E."/>
            <person name="Ambesi-Impiombato A."/>
            <person name="Apweiler R."/>
            <person name="Aturaliya R.N."/>
            <person name="Bailey T.L."/>
            <person name="Bansal M."/>
            <person name="Baxter L."/>
            <person name="Beisel K.W."/>
            <person name="Bersano T."/>
            <person name="Bono H."/>
            <person name="Chalk A.M."/>
            <person name="Chiu K.P."/>
            <person name="Choudhary V."/>
            <person name="Christoffels A."/>
            <person name="Clutterbuck D.R."/>
            <person name="Crowe M.L."/>
            <person name="Dalla E."/>
            <person name="Dalrymple B.P."/>
            <person name="de Bono B."/>
            <person name="Della Gatta G."/>
            <person name="di Bernardo D."/>
            <person name="Down T."/>
            <person name="Engstrom P."/>
            <person name="Fagiolini M."/>
            <person name="Faulkner G."/>
            <person name="Fletcher C.F."/>
            <person name="Fukushima T."/>
            <person name="Furuno M."/>
            <person name="Futaki S."/>
            <person name="Gariboldi M."/>
            <person name="Georgii-Hemming P."/>
            <person name="Gingeras T.R."/>
            <person name="Gojobori T."/>
            <person name="Green R.E."/>
            <person name="Gustincich S."/>
            <person name="Harbers M."/>
            <person name="Hayashi Y."/>
            <person name="Hensch T.K."/>
            <person name="Hirokawa N."/>
            <person name="Hill D."/>
            <person name="Huminiecki L."/>
            <person name="Iacono M."/>
            <person name="Ikeo K."/>
            <person name="Iwama A."/>
            <person name="Ishikawa T."/>
            <person name="Jakt M."/>
            <person name="Kanapin A."/>
            <person name="Katoh M."/>
            <person name="Kawasawa Y."/>
            <person name="Kelso J."/>
            <person name="Kitamura H."/>
            <person name="Kitano H."/>
            <person name="Kollias G."/>
            <person name="Krishnan S.P."/>
            <person name="Kruger A."/>
            <person name="Kummerfeld S.K."/>
            <person name="Kurochkin I.V."/>
            <person name="Lareau L.F."/>
            <person name="Lazarevic D."/>
            <person name="Lipovich L."/>
            <person name="Liu J."/>
            <person name="Liuni S."/>
            <person name="McWilliam S."/>
            <person name="Madan Babu M."/>
            <person name="Madera M."/>
            <person name="Marchionni L."/>
            <person name="Matsuda H."/>
            <person name="Matsuzawa S."/>
            <person name="Miki H."/>
            <person name="Mignone F."/>
            <person name="Miyake S."/>
            <person name="Morris K."/>
            <person name="Mottagui-Tabar S."/>
            <person name="Mulder N."/>
            <person name="Nakano N."/>
            <person name="Nakauchi H."/>
            <person name="Ng P."/>
            <person name="Nilsson R."/>
            <person name="Nishiguchi S."/>
            <person name="Nishikawa S."/>
            <person name="Nori F."/>
            <person name="Ohara O."/>
            <person name="Okazaki Y."/>
            <person name="Orlando V."/>
            <person name="Pang K.C."/>
            <person name="Pavan W.J."/>
            <person name="Pavesi G."/>
            <person name="Pesole G."/>
            <person name="Petrovsky N."/>
            <person name="Piazza S."/>
            <person name="Reed J."/>
            <person name="Reid J.F."/>
            <person name="Ring B.Z."/>
            <person name="Ringwald M."/>
            <person name="Rost B."/>
            <person name="Ruan Y."/>
            <person name="Salzberg S.L."/>
            <person name="Sandelin A."/>
            <person name="Schneider C."/>
            <person name="Schoenbach C."/>
            <person name="Sekiguchi K."/>
            <person name="Semple C.A."/>
            <person name="Seno S."/>
            <person name="Sessa L."/>
            <person name="Sheng Y."/>
            <person name="Shibata Y."/>
            <person name="Shimada H."/>
            <person name="Shimada K."/>
            <person name="Silva D."/>
            <person name="Sinclair B."/>
            <person name="Sperling S."/>
            <person name="Stupka E."/>
            <person name="Sugiura K."/>
            <person name="Sultana R."/>
            <person name="Takenaka Y."/>
            <person name="Taki K."/>
            <person name="Tammoja K."/>
            <person name="Tan S.L."/>
            <person name="Tang S."/>
            <person name="Taylor M.S."/>
            <person name="Tegner J."/>
            <person name="Teichmann S.A."/>
            <person name="Ueda H.R."/>
            <person name="van Nimwegen E."/>
            <person name="Verardo R."/>
            <person name="Wei C.L."/>
            <person name="Yagi K."/>
            <person name="Yamanishi H."/>
            <person name="Zabarovsky E."/>
            <person name="Zhu S."/>
            <person name="Zimmer A."/>
            <person name="Hide W."/>
            <person name="Bult C."/>
            <person name="Grimmond S.M."/>
            <person name="Teasdale R.D."/>
            <person name="Liu E.T."/>
            <person name="Brusic V."/>
            <person name="Quackenbush J."/>
            <person name="Wahlestedt C."/>
            <person name="Mattick J.S."/>
            <person name="Hume D.A."/>
            <person name="Kai C."/>
            <person name="Sasaki D."/>
            <person name="Tomaru Y."/>
            <person name="Fukuda S."/>
            <person name="Kanamori-Katayama M."/>
            <person name="Suzuki M."/>
            <person name="Aoki J."/>
            <person name="Arakawa T."/>
            <person name="Iida J."/>
            <person name="Imamura K."/>
            <person name="Itoh M."/>
            <person name="Kato T."/>
            <person name="Kawaji H."/>
            <person name="Kawagashira N."/>
            <person name="Kawashima T."/>
            <person name="Kojima M."/>
            <person name="Kondo S."/>
            <person name="Konno H."/>
            <person name="Nakano K."/>
            <person name="Ninomiya N."/>
            <person name="Nishio T."/>
            <person name="Okada M."/>
            <person name="Plessy C."/>
            <person name="Shibata K."/>
            <person name="Shiraki T."/>
            <person name="Suzuki S."/>
            <person name="Tagami M."/>
            <person name="Waki K."/>
            <person name="Watahiki A."/>
            <person name="Okamura-Oho Y."/>
            <person name="Suzuki H."/>
            <person name="Kawai J."/>
            <person name="Hayashizaki Y."/>
        </authorList>
    </citation>
    <scope>NUCLEOTIDE SEQUENCE [LARGE SCALE MRNA] (ISOFORMS 1 AND 2)</scope>
    <source>
        <strain>C57BL/6J</strain>
        <tissue>Thymus</tissue>
    </source>
</reference>
<reference key="2">
    <citation type="journal article" date="2004" name="Genome Res.">
        <title>The status, quality, and expansion of the NIH full-length cDNA project: the Mammalian Gene Collection (MGC).</title>
        <authorList>
            <consortium name="The MGC Project Team"/>
        </authorList>
    </citation>
    <scope>NUCLEOTIDE SEQUENCE [LARGE SCALE MRNA] (ISOFORM 2)</scope>
    <source>
        <strain>Czech II</strain>
        <tissue>Mammary gland</tissue>
    </source>
</reference>
<reference key="3">
    <citation type="journal article" date="2009" name="Mol. Cell. Proteomics">
        <title>The mouse C2C12 myoblast cell surface N-linked glycoproteome: identification, glycosite occupancy, and membrane orientation.</title>
        <authorList>
            <person name="Gundry R.L."/>
            <person name="Raginski K."/>
            <person name="Tarasova Y."/>
            <person name="Tchernyshyov I."/>
            <person name="Bausch-Fluck D."/>
            <person name="Elliott S.T."/>
            <person name="Boheler K.R."/>
            <person name="Van Eyk J.E."/>
            <person name="Wollscheid B."/>
        </authorList>
    </citation>
    <scope>GLYCOSYLATION [LARGE SCALE ANALYSIS] AT ASN-187 AND ASN-200</scope>
    <source>
        <tissue>Myoblast</tissue>
    </source>
</reference>
<reference key="4">
    <citation type="journal article" date="2009" name="Nat. Biotechnol.">
        <title>Mass-spectrometric identification and relative quantification of N-linked cell surface glycoproteins.</title>
        <authorList>
            <person name="Wollscheid B."/>
            <person name="Bausch-Fluck D."/>
            <person name="Henderson C."/>
            <person name="O'Brien R."/>
            <person name="Bibel M."/>
            <person name="Schiess R."/>
            <person name="Aebersold R."/>
            <person name="Watts J.D."/>
        </authorList>
    </citation>
    <scope>GLYCOSYLATION [LARGE SCALE ANALYSIS] AT ASN-187 AND ASN-200</scope>
</reference>
<reference key="5">
    <citation type="journal article" date="2010" name="Cell">
        <title>A tissue-specific atlas of mouse protein phosphorylation and expression.</title>
        <authorList>
            <person name="Huttlin E.L."/>
            <person name="Jedrychowski M.P."/>
            <person name="Elias J.E."/>
            <person name="Goswami T."/>
            <person name="Rad R."/>
            <person name="Beausoleil S.A."/>
            <person name="Villen J."/>
            <person name="Haas W."/>
            <person name="Sowa M.E."/>
            <person name="Gygi S.P."/>
        </authorList>
    </citation>
    <scope>IDENTIFICATION BY MASS SPECTROMETRY [LARGE SCALE ANALYSIS]</scope>
    <source>
        <tissue>Brain</tissue>
        <tissue>Heart</tissue>
        <tissue>Kidney</tissue>
        <tissue>Lung</tissue>
        <tissue>Spleen</tissue>
        <tissue>Testis</tissue>
    </source>
</reference>
<reference key="6">
    <citation type="journal article" date="2010" name="Protein J.">
        <title>Isoforms, expression, glycosylation, and tissue distribution of CTL2/SLC44A2.</title>
        <authorList>
            <person name="Kommareddi P.K."/>
            <person name="Nair T.S."/>
            <person name="Thang L.V."/>
            <person name="Galano M.M."/>
            <person name="Babu E."/>
            <person name="Ganapathy V."/>
            <person name="Kanazawa T."/>
            <person name="McHugh J.B."/>
            <person name="Carey T.E."/>
        </authorList>
    </citation>
    <scope>CHARACTERIZATION OF ISOFORMS 1 AND 3</scope>
    <scope>ALTERNATIVE PROMOTER USAGE</scope>
    <scope>TISSUE SPECIFICITY</scope>
    <scope>GLYCOSYLATION</scope>
</reference>
<comment type="function">
    <text evidence="2">Choline/H+ antiporter, mainly in mitochodria. Also acts as a low-affinity ethanolamine/H+ antiporter, regulating the supply of extracellular ethanolamine (Etn) for the CDP-Etn pathway, redistribute intracellular Etn and balance the CDP-Cho and CDP-Etn arms of the Kennedy pathway.</text>
</comment>
<comment type="catalytic activity">
    <reaction evidence="2">
        <text>choline(out) + n H(+)(in) = choline(in) + n H(+)(out)</text>
        <dbReference type="Rhea" id="RHEA:75463"/>
        <dbReference type="ChEBI" id="CHEBI:15354"/>
        <dbReference type="ChEBI" id="CHEBI:15378"/>
    </reaction>
</comment>
<comment type="catalytic activity">
    <reaction evidence="2">
        <text>ethanolamine(out) + n H(+)(in) = ethanolamine(in) + n H(+)(out)</text>
        <dbReference type="Rhea" id="RHEA:75467"/>
        <dbReference type="ChEBI" id="CHEBI:15378"/>
        <dbReference type="ChEBI" id="CHEBI:57603"/>
    </reaction>
</comment>
<comment type="subunit">
    <text evidence="2">Interacts with COCH.</text>
</comment>
<comment type="subcellular location">
    <subcellularLocation>
        <location evidence="2">Cell membrane</location>
        <topology evidence="3">Multi-pass membrane protein</topology>
    </subcellularLocation>
    <subcellularLocation>
        <location evidence="2">Mitochondrion outer membrane</location>
        <topology evidence="3">Multi-pass membrane protein</topology>
    </subcellularLocation>
    <text evidence="1">Mainly expressed in mitochondria.</text>
</comment>
<comment type="alternative products">
    <event type="alternative promoter"/>
    <isoform>
        <id>Q8BY89-1</id>
        <name>1</name>
        <name>CTL2a</name>
        <name>CTL2P2</name>
        <sequence type="displayed"/>
    </isoform>
    <isoform>
        <id>Q8BY89-2</id>
        <name>2</name>
        <name>CTL2b</name>
        <name>CTL2P1</name>
        <sequence type="described" ref="VSP_015432"/>
    </isoform>
</comment>
<comment type="tissue specificity">
    <text evidence="6">Expressed at high levels in lung, colon, inner ear and spleen (at protein level). Progressively lower levels in brain, tongue, liver and kidney (at protein level). In the kidney, prominent expression in glomeruli in the lining of Bowman's capsule and on the mesangial cells adjacent to the vessels within the glomerulus (at protein level). Strongly expressed on the membranes of splenocytes and in lung parenchyme (at protein level).</text>
</comment>
<comment type="tissue specificity">
    <molecule>Isoform 1</molecule>
    <text evidence="6">Expressed at higher levels than isoform 2 in colon, heart, kidney, lung, cochlea, tongue and muscle, as well as in the inner ear.</text>
</comment>
<comment type="tissue specificity">
    <molecule>Isoform 2</molecule>
    <text evidence="6">Predominantly expressed in brain, liver and spleen.</text>
</comment>
<comment type="PTM">
    <text evidence="6">Glycosylated, glycosylation differs from tissue to tissue. The molecular mass of the mature glycosylated protein is highest in kidney, followed by lung, colon and spleen, then brain and tongue.</text>
</comment>
<comment type="miscellaneous">
    <molecule>Isoform 2</molecule>
    <text evidence="9">Produced by alternative promoter usage.</text>
</comment>
<comment type="similarity">
    <text evidence="9">Belongs to the CTL (choline transporter-like) family.</text>
</comment>
<feature type="chain" id="PRO_0000191718" description="Choline transporter-like protein 2">
    <location>
        <begin position="1"/>
        <end position="706"/>
    </location>
</feature>
<feature type="topological domain" description="Cytoplasmic" evidence="3">
    <location>
        <begin position="1"/>
        <end position="33"/>
    </location>
</feature>
<feature type="transmembrane region" description="Helical" evidence="3">
    <location>
        <begin position="34"/>
        <end position="54"/>
    </location>
</feature>
<feature type="topological domain" description="Extracellular" evidence="3">
    <location>
        <begin position="55"/>
        <end position="232"/>
    </location>
</feature>
<feature type="transmembrane region" description="Helical" evidence="3">
    <location>
        <begin position="233"/>
        <end position="253"/>
    </location>
</feature>
<feature type="topological domain" description="Cytoplasmic" evidence="3">
    <location>
        <begin position="254"/>
        <end position="256"/>
    </location>
</feature>
<feature type="transmembrane region" description="Helical" evidence="3">
    <location>
        <begin position="257"/>
        <end position="277"/>
    </location>
</feature>
<feature type="topological domain" description="Extracellular" evidence="3">
    <location>
        <begin position="278"/>
        <end position="315"/>
    </location>
</feature>
<feature type="transmembrane region" description="Helical" evidence="3">
    <location>
        <begin position="316"/>
        <end position="336"/>
    </location>
</feature>
<feature type="topological domain" description="Cytoplasmic" evidence="3">
    <location>
        <begin position="337"/>
        <end position="364"/>
    </location>
</feature>
<feature type="transmembrane region" description="Helical" evidence="3">
    <location>
        <begin position="365"/>
        <end position="385"/>
    </location>
</feature>
<feature type="topological domain" description="Extracellular" evidence="3">
    <location>
        <begin position="386"/>
        <end position="454"/>
    </location>
</feature>
<feature type="transmembrane region" description="Helical" evidence="3">
    <location>
        <begin position="455"/>
        <end position="477"/>
    </location>
</feature>
<feature type="topological domain" description="Cytoplasmic" evidence="3">
    <location>
        <begin position="478"/>
        <end position="504"/>
    </location>
</feature>
<feature type="transmembrane region" description="Helical" evidence="3">
    <location>
        <begin position="505"/>
        <end position="525"/>
    </location>
</feature>
<feature type="topological domain" description="Extracellular" evidence="3">
    <location>
        <begin position="526"/>
        <end position="563"/>
    </location>
</feature>
<feature type="transmembrane region" description="Helical" evidence="3">
    <location>
        <begin position="564"/>
        <end position="584"/>
    </location>
</feature>
<feature type="topological domain" description="Cytoplasmic" evidence="3">
    <location>
        <begin position="585"/>
        <end position="599"/>
    </location>
</feature>
<feature type="transmembrane region" description="Helical" evidence="3">
    <location>
        <begin position="600"/>
        <end position="620"/>
    </location>
</feature>
<feature type="topological domain" description="Extracellular" evidence="3">
    <location>
        <begin position="621"/>
        <end position="638"/>
    </location>
</feature>
<feature type="transmembrane region" description="Helical" evidence="3">
    <location>
        <begin position="639"/>
        <end position="659"/>
    </location>
</feature>
<feature type="topological domain" description="Cytoplasmic" evidence="3">
    <location>
        <begin position="660"/>
        <end position="706"/>
    </location>
</feature>
<feature type="modified residue" description="Phosphothreonine" evidence="2">
    <location>
        <position position="14"/>
    </location>
</feature>
<feature type="glycosylation site" description="N-linked (GlcNAc...) asparagine" evidence="4 5">
    <location>
        <position position="187"/>
    </location>
</feature>
<feature type="glycosylation site" description="N-linked (GlcNAc...) asparagine" evidence="4 5">
    <location>
        <position position="200"/>
    </location>
</feature>
<feature type="glycosylation site" description="N-linked (GlcNAc...) asparagine" evidence="3">
    <location>
        <position position="417"/>
    </location>
</feature>
<feature type="splice variant" id="VSP_015432" description="In isoform 2." evidence="7 8">
    <original>MGKDSQNYYGKH</original>
    <variation>MEDDRKDAVY</variation>
    <location>
        <begin position="1"/>
        <end position="12"/>
    </location>
</feature>
<proteinExistence type="evidence at protein level"/>
<dbReference type="EMBL" id="AK041533">
    <property type="protein sequence ID" value="BAC30976.1"/>
    <property type="molecule type" value="mRNA"/>
</dbReference>
<dbReference type="EMBL" id="AK048648">
    <property type="protein sequence ID" value="BAC33409.1"/>
    <property type="molecule type" value="mRNA"/>
</dbReference>
<dbReference type="EMBL" id="BC031535">
    <property type="protein sequence ID" value="AAH31535.1"/>
    <property type="molecule type" value="mRNA"/>
</dbReference>
<dbReference type="CCDS" id="CCDS22903.1">
    <molecule id="Q8BY89-1"/>
</dbReference>
<dbReference type="CCDS" id="CCDS90511.1">
    <molecule id="Q8BY89-2"/>
</dbReference>
<dbReference type="RefSeq" id="NP_001186115.1">
    <molecule id="Q8BY89-2"/>
    <property type="nucleotide sequence ID" value="NM_001199186.1"/>
</dbReference>
<dbReference type="RefSeq" id="NP_690021.1">
    <molecule id="Q8BY89-1"/>
    <property type="nucleotide sequence ID" value="NM_152808.3"/>
</dbReference>
<dbReference type="SMR" id="Q8BY89"/>
<dbReference type="BioGRID" id="212989">
    <property type="interactions" value="4"/>
</dbReference>
<dbReference type="FunCoup" id="Q8BY89">
    <property type="interactions" value="1267"/>
</dbReference>
<dbReference type="STRING" id="10090.ENSMUSP00000034697"/>
<dbReference type="TCDB" id="2.A.92.1.2">
    <property type="family name" value="the choline transporter-like (ctl) family"/>
</dbReference>
<dbReference type="GlyConnect" id="2211">
    <property type="glycosylation" value="3 N-Linked glycans (2 sites)"/>
</dbReference>
<dbReference type="GlyCosmos" id="Q8BY89">
    <property type="glycosylation" value="3 sites, 3 glycans"/>
</dbReference>
<dbReference type="GlyGen" id="Q8BY89">
    <property type="glycosylation" value="5 sites, 6 N-linked glycans (3 sites), 1 O-linked glycan (1 site)"/>
</dbReference>
<dbReference type="iPTMnet" id="Q8BY89"/>
<dbReference type="PhosphoSitePlus" id="Q8BY89"/>
<dbReference type="SwissPalm" id="Q8BY89"/>
<dbReference type="jPOST" id="Q8BY89"/>
<dbReference type="PaxDb" id="10090-ENSMUSP00000034697"/>
<dbReference type="PeptideAtlas" id="Q8BY89"/>
<dbReference type="ProteomicsDB" id="277919">
    <molecule id="Q8BY89-1"/>
</dbReference>
<dbReference type="ProteomicsDB" id="277920">
    <molecule id="Q8BY89-2"/>
</dbReference>
<dbReference type="Pumba" id="Q8BY89"/>
<dbReference type="Antibodypedia" id="1011">
    <property type="antibodies" value="138 antibodies from 25 providers"/>
</dbReference>
<dbReference type="DNASU" id="68682"/>
<dbReference type="Ensembl" id="ENSMUST00000034697.8">
    <molecule id="Q8BY89-1"/>
    <property type="protein sequence ID" value="ENSMUSP00000034697.8"/>
    <property type="gene ID" value="ENSMUSG00000057193.9"/>
</dbReference>
<dbReference type="Ensembl" id="ENSMUST00000217461.2">
    <molecule id="Q8BY89-2"/>
    <property type="protein sequence ID" value="ENSMUSP00000150147.2"/>
    <property type="gene ID" value="ENSMUSG00000057193.9"/>
</dbReference>
<dbReference type="GeneID" id="68682"/>
<dbReference type="KEGG" id="mmu:68682"/>
<dbReference type="UCSC" id="uc009okz.2">
    <molecule id="Q8BY89-2"/>
    <property type="organism name" value="mouse"/>
</dbReference>
<dbReference type="UCSC" id="uc009ola.2">
    <molecule id="Q8BY89-1"/>
    <property type="organism name" value="mouse"/>
</dbReference>
<dbReference type="AGR" id="MGI:1915932"/>
<dbReference type="CTD" id="57153"/>
<dbReference type="MGI" id="MGI:1915932">
    <property type="gene designation" value="Slc44a2"/>
</dbReference>
<dbReference type="VEuPathDB" id="HostDB:ENSMUSG00000057193"/>
<dbReference type="eggNOG" id="KOG1362">
    <property type="taxonomic scope" value="Eukaryota"/>
</dbReference>
<dbReference type="GeneTree" id="ENSGT00940000158178"/>
<dbReference type="HOGENOM" id="CLU_017181_3_1_1"/>
<dbReference type="InParanoid" id="Q8BY89"/>
<dbReference type="OMA" id="SQRKCRD"/>
<dbReference type="OrthoDB" id="420519at2759"/>
<dbReference type="PhylomeDB" id="Q8BY89"/>
<dbReference type="TreeFam" id="TF313325"/>
<dbReference type="Reactome" id="R-MMU-1483191">
    <property type="pathway name" value="Synthesis of PC"/>
</dbReference>
<dbReference type="Reactome" id="R-MMU-425366">
    <property type="pathway name" value="Transport of bile salts and organic acids, metal ions and amine compounds"/>
</dbReference>
<dbReference type="Reactome" id="R-MMU-6798695">
    <property type="pathway name" value="Neutrophil degranulation"/>
</dbReference>
<dbReference type="BioGRID-ORCS" id="68682">
    <property type="hits" value="0 hits in 80 CRISPR screens"/>
</dbReference>
<dbReference type="ChiTaRS" id="Slc44a2">
    <property type="organism name" value="mouse"/>
</dbReference>
<dbReference type="PRO" id="PR:Q8BY89"/>
<dbReference type="Proteomes" id="UP000000589">
    <property type="component" value="Chromosome 9"/>
</dbReference>
<dbReference type="RNAct" id="Q8BY89">
    <property type="molecule type" value="protein"/>
</dbReference>
<dbReference type="Bgee" id="ENSMUSG00000057193">
    <property type="expression patterns" value="Expressed in vestibular membrane of cochlear duct and 257 other cell types or tissues"/>
</dbReference>
<dbReference type="ExpressionAtlas" id="Q8BY89">
    <property type="expression patterns" value="baseline and differential"/>
</dbReference>
<dbReference type="GO" id="GO:0005741">
    <property type="term" value="C:mitochondrial outer membrane"/>
    <property type="evidence" value="ECO:0000250"/>
    <property type="project" value="UniProtKB"/>
</dbReference>
<dbReference type="GO" id="GO:0005886">
    <property type="term" value="C:plasma membrane"/>
    <property type="evidence" value="ECO:0000250"/>
    <property type="project" value="UniProtKB"/>
</dbReference>
<dbReference type="GO" id="GO:0015297">
    <property type="term" value="F:antiporter activity"/>
    <property type="evidence" value="ECO:0007669"/>
    <property type="project" value="UniProtKB-KW"/>
</dbReference>
<dbReference type="GO" id="GO:0015220">
    <property type="term" value="F:choline transmembrane transporter activity"/>
    <property type="evidence" value="ECO:0000250"/>
    <property type="project" value="UniProtKB"/>
</dbReference>
<dbReference type="GO" id="GO:0034228">
    <property type="term" value="F:ethanolamine transmembrane transporter activity"/>
    <property type="evidence" value="ECO:0000250"/>
    <property type="project" value="UniProtKB"/>
</dbReference>
<dbReference type="GO" id="GO:0015871">
    <property type="term" value="P:choline transport"/>
    <property type="evidence" value="ECO:0000250"/>
    <property type="project" value="UniProtKB"/>
</dbReference>
<dbReference type="GO" id="GO:0034229">
    <property type="term" value="P:ethanolamine transport"/>
    <property type="evidence" value="ECO:0000250"/>
    <property type="project" value="UniProtKB"/>
</dbReference>
<dbReference type="InterPro" id="IPR007603">
    <property type="entry name" value="Choline_transptr-like"/>
</dbReference>
<dbReference type="PANTHER" id="PTHR12385">
    <property type="entry name" value="CHOLINE TRANSPORTER-LIKE (SLC FAMILY 44)"/>
    <property type="match status" value="1"/>
</dbReference>
<dbReference type="PANTHER" id="PTHR12385:SF34">
    <property type="entry name" value="CHOLINE TRANSPORTER-LIKE PROTEIN 2"/>
    <property type="match status" value="1"/>
</dbReference>
<dbReference type="Pfam" id="PF04515">
    <property type="entry name" value="Choline_transpo"/>
    <property type="match status" value="1"/>
</dbReference>
<name>CTL2_MOUSE</name>
<accession>Q8BY89</accession>
<accession>Q8K2F1</accession>
<protein>
    <recommendedName>
        <fullName>Choline transporter-like protein 2</fullName>
    </recommendedName>
    <alternativeName>
        <fullName>Solute carrier family 44 member 2</fullName>
    </alternativeName>
</protein>